<feature type="chain" id="PRO_0000190648" description="4-hydroxy-3-methylbut-2-en-1-yl diphosphate synthase (flavodoxin)">
    <location>
        <begin position="1"/>
        <end position="404"/>
    </location>
</feature>
<feature type="binding site" evidence="1">
    <location>
        <position position="310"/>
    </location>
    <ligand>
        <name>[4Fe-4S] cluster</name>
        <dbReference type="ChEBI" id="CHEBI:49883"/>
    </ligand>
</feature>
<feature type="binding site" evidence="1">
    <location>
        <position position="313"/>
    </location>
    <ligand>
        <name>[4Fe-4S] cluster</name>
        <dbReference type="ChEBI" id="CHEBI:49883"/>
    </ligand>
</feature>
<feature type="binding site" evidence="1">
    <location>
        <position position="345"/>
    </location>
    <ligand>
        <name>[4Fe-4S] cluster</name>
        <dbReference type="ChEBI" id="CHEBI:49883"/>
    </ligand>
</feature>
<feature type="binding site" evidence="1">
    <location>
        <position position="352"/>
    </location>
    <ligand>
        <name>[4Fe-4S] cluster</name>
        <dbReference type="ChEBI" id="CHEBI:49883"/>
    </ligand>
</feature>
<protein>
    <recommendedName>
        <fullName evidence="1">4-hydroxy-3-methylbut-2-en-1-yl diphosphate synthase (flavodoxin)</fullName>
        <ecNumber evidence="1">1.17.7.3</ecNumber>
    </recommendedName>
    <alternativeName>
        <fullName evidence="1">1-hydroxy-2-methyl-2-(E)-butenyl 4-diphosphate synthase</fullName>
    </alternativeName>
</protein>
<reference key="1">
    <citation type="journal article" date="1998" name="Science">
        <title>Complete genome sequence of Treponema pallidum, the syphilis spirochete.</title>
        <authorList>
            <person name="Fraser C.M."/>
            <person name="Norris S.J."/>
            <person name="Weinstock G.M."/>
            <person name="White O."/>
            <person name="Sutton G.G."/>
            <person name="Dodson R.J."/>
            <person name="Gwinn M.L."/>
            <person name="Hickey E.K."/>
            <person name="Clayton R.A."/>
            <person name="Ketchum K.A."/>
            <person name="Sodergren E."/>
            <person name="Hardham J.M."/>
            <person name="McLeod M.P."/>
            <person name="Salzberg S.L."/>
            <person name="Peterson J.D."/>
            <person name="Khalak H.G."/>
            <person name="Richardson D.L."/>
            <person name="Howell J.K."/>
            <person name="Chidambaram M."/>
            <person name="Utterback T.R."/>
            <person name="McDonald L.A."/>
            <person name="Artiach P."/>
            <person name="Bowman C."/>
            <person name="Cotton M.D."/>
            <person name="Fujii C."/>
            <person name="Garland S.A."/>
            <person name="Hatch B."/>
            <person name="Horst K."/>
            <person name="Roberts K.M."/>
            <person name="Sandusky M."/>
            <person name="Weidman J.F."/>
            <person name="Smith H.O."/>
            <person name="Venter J.C."/>
        </authorList>
    </citation>
    <scope>NUCLEOTIDE SEQUENCE [LARGE SCALE GENOMIC DNA]</scope>
    <source>
        <strain>Nichols</strain>
    </source>
</reference>
<proteinExistence type="inferred from homology"/>
<organism>
    <name type="scientific">Treponema pallidum (strain Nichols)</name>
    <dbReference type="NCBI Taxonomy" id="243276"/>
    <lineage>
        <taxon>Bacteria</taxon>
        <taxon>Pseudomonadati</taxon>
        <taxon>Spirochaetota</taxon>
        <taxon>Spirochaetia</taxon>
        <taxon>Spirochaetales</taxon>
        <taxon>Treponemataceae</taxon>
        <taxon>Treponema</taxon>
    </lineage>
</organism>
<gene>
    <name evidence="1" type="primary">ispG</name>
    <name type="ordered locus">TP_0446</name>
</gene>
<keyword id="KW-0004">4Fe-4S</keyword>
<keyword id="KW-0408">Iron</keyword>
<keyword id="KW-0411">Iron-sulfur</keyword>
<keyword id="KW-0414">Isoprene biosynthesis</keyword>
<keyword id="KW-0479">Metal-binding</keyword>
<keyword id="KW-0560">Oxidoreductase</keyword>
<keyword id="KW-1185">Reference proteome</keyword>
<comment type="function">
    <text evidence="1">Converts 2C-methyl-D-erythritol 2,4-cyclodiphosphate (ME-2,4cPP) into 1-hydroxy-2-methyl-2-(E)-butenyl 4-diphosphate.</text>
</comment>
<comment type="catalytic activity">
    <reaction evidence="1">
        <text>(2E)-4-hydroxy-3-methylbut-2-enyl diphosphate + oxidized [flavodoxin] + H2O + 2 H(+) = 2-C-methyl-D-erythritol 2,4-cyclic diphosphate + reduced [flavodoxin]</text>
        <dbReference type="Rhea" id="RHEA:43604"/>
        <dbReference type="Rhea" id="RHEA-COMP:10622"/>
        <dbReference type="Rhea" id="RHEA-COMP:10623"/>
        <dbReference type="ChEBI" id="CHEBI:15377"/>
        <dbReference type="ChEBI" id="CHEBI:15378"/>
        <dbReference type="ChEBI" id="CHEBI:57618"/>
        <dbReference type="ChEBI" id="CHEBI:58210"/>
        <dbReference type="ChEBI" id="CHEBI:58483"/>
        <dbReference type="ChEBI" id="CHEBI:128753"/>
        <dbReference type="EC" id="1.17.7.3"/>
    </reaction>
</comment>
<comment type="cofactor">
    <cofactor evidence="1">
        <name>[4Fe-4S] cluster</name>
        <dbReference type="ChEBI" id="CHEBI:49883"/>
    </cofactor>
    <text evidence="1">Binds 1 [4Fe-4S] cluster.</text>
</comment>
<comment type="pathway">
    <text evidence="1">Isoprenoid biosynthesis; isopentenyl diphosphate biosynthesis via DXP pathway; isopentenyl diphosphate from 1-deoxy-D-xylulose 5-phosphate: step 5/6.</text>
</comment>
<comment type="similarity">
    <text evidence="1">Belongs to the IspG family.</text>
</comment>
<accession>O83460</accession>
<name>ISPG_TREPA</name>
<sequence length="404" mass="43734">MDSSAGVSPCNSPYGSGLLDVPLKLRPRASHYRARSLVIGGKEHVRALPLGGDAPIPIQTMWKEPLIGADLQSIVDRLLELEQLGCDVVRFAVPDRESAELFVALCARTRMPLVADIHFDYRLALRCMDGPVAKVRINPGNIGVRERVRAVVEKARATGTALRIGVNTGSLPGVVKRAVAARYADGMQSVNARAEALVQTAFAEAAYLDQLHFDRVVLSLKASTVAETVRANELFAQQSDIPLHLGVTEAGPLVSGIVKSTLAFSQLLSRNIGATVRVSLSDSMEHEVLAAREILAECGKRAGGVRLVSCPRCGRIGFDVHAFVRRWQKELFSLKKDITVAVMGCVVNGPGEGKHADLGISGAEDSVIFFKRGKIVRRIQVRDLCADERTRIIDAAFKEELSSL</sequence>
<evidence type="ECO:0000255" key="1">
    <source>
        <dbReference type="HAMAP-Rule" id="MF_00159"/>
    </source>
</evidence>
<dbReference type="EC" id="1.17.7.3" evidence="1"/>
<dbReference type="EMBL" id="AE000520">
    <property type="protein sequence ID" value="AAC65433.1"/>
    <property type="molecule type" value="Genomic_DNA"/>
</dbReference>
<dbReference type="PIR" id="F71324">
    <property type="entry name" value="F71324"/>
</dbReference>
<dbReference type="SMR" id="O83460"/>
<dbReference type="IntAct" id="O83460">
    <property type="interactions" value="2"/>
</dbReference>
<dbReference type="STRING" id="243276.TP_0446"/>
<dbReference type="EnsemblBacteria" id="AAC65433">
    <property type="protein sequence ID" value="AAC65433"/>
    <property type="gene ID" value="TP_0446"/>
</dbReference>
<dbReference type="KEGG" id="tpa:TP_0446"/>
<dbReference type="KEGG" id="tpw:TPANIC_0446"/>
<dbReference type="eggNOG" id="COG0821">
    <property type="taxonomic scope" value="Bacteria"/>
</dbReference>
<dbReference type="HOGENOM" id="CLU_042258_0_0_12"/>
<dbReference type="UniPathway" id="UPA00056">
    <property type="reaction ID" value="UER00096"/>
</dbReference>
<dbReference type="Proteomes" id="UP000000811">
    <property type="component" value="Chromosome"/>
</dbReference>
<dbReference type="GO" id="GO:0051539">
    <property type="term" value="F:4 iron, 4 sulfur cluster binding"/>
    <property type="evidence" value="ECO:0007669"/>
    <property type="project" value="UniProtKB-UniRule"/>
</dbReference>
<dbReference type="GO" id="GO:0046429">
    <property type="term" value="F:4-hydroxy-3-methylbut-2-en-1-yl diphosphate synthase activity (ferredoxin)"/>
    <property type="evidence" value="ECO:0007669"/>
    <property type="project" value="UniProtKB-UniRule"/>
</dbReference>
<dbReference type="GO" id="GO:0141197">
    <property type="term" value="F:4-hydroxy-3-methylbut-2-enyl-diphosphate synthase activity (flavodoxin)"/>
    <property type="evidence" value="ECO:0007669"/>
    <property type="project" value="UniProtKB-EC"/>
</dbReference>
<dbReference type="GO" id="GO:0005506">
    <property type="term" value="F:iron ion binding"/>
    <property type="evidence" value="ECO:0007669"/>
    <property type="project" value="InterPro"/>
</dbReference>
<dbReference type="GO" id="GO:0019288">
    <property type="term" value="P:isopentenyl diphosphate biosynthetic process, methylerythritol 4-phosphate pathway"/>
    <property type="evidence" value="ECO:0007669"/>
    <property type="project" value="UniProtKB-UniRule"/>
</dbReference>
<dbReference type="GO" id="GO:0016114">
    <property type="term" value="P:terpenoid biosynthetic process"/>
    <property type="evidence" value="ECO:0007669"/>
    <property type="project" value="InterPro"/>
</dbReference>
<dbReference type="Gene3D" id="3.20.20.20">
    <property type="entry name" value="Dihydropteroate synthase-like"/>
    <property type="match status" value="1"/>
</dbReference>
<dbReference type="Gene3D" id="3.30.413.10">
    <property type="entry name" value="Sulfite Reductase Hemoprotein, domain 1"/>
    <property type="match status" value="1"/>
</dbReference>
<dbReference type="HAMAP" id="MF_00159">
    <property type="entry name" value="IspG"/>
    <property type="match status" value="1"/>
</dbReference>
<dbReference type="InterPro" id="IPR011005">
    <property type="entry name" value="Dihydropteroate_synth-like_sf"/>
</dbReference>
<dbReference type="InterPro" id="IPR016425">
    <property type="entry name" value="IspG_bac"/>
</dbReference>
<dbReference type="InterPro" id="IPR004588">
    <property type="entry name" value="IspG_bac-typ"/>
</dbReference>
<dbReference type="InterPro" id="IPR045854">
    <property type="entry name" value="NO2/SO3_Rdtase_4Fe4S_sf"/>
</dbReference>
<dbReference type="NCBIfam" id="TIGR00612">
    <property type="entry name" value="ispG_gcpE"/>
    <property type="match status" value="1"/>
</dbReference>
<dbReference type="NCBIfam" id="NF001540">
    <property type="entry name" value="PRK00366.1"/>
    <property type="match status" value="1"/>
</dbReference>
<dbReference type="PANTHER" id="PTHR30454">
    <property type="entry name" value="4-HYDROXY-3-METHYLBUT-2-EN-1-YL DIPHOSPHATE SYNTHASE"/>
    <property type="match status" value="1"/>
</dbReference>
<dbReference type="PANTHER" id="PTHR30454:SF0">
    <property type="entry name" value="4-HYDROXY-3-METHYLBUT-2-EN-1-YL DIPHOSPHATE SYNTHASE (FERREDOXIN), CHLOROPLASTIC"/>
    <property type="match status" value="1"/>
</dbReference>
<dbReference type="Pfam" id="PF04551">
    <property type="entry name" value="GcpE"/>
    <property type="match status" value="1"/>
</dbReference>
<dbReference type="PIRSF" id="PIRSF004640">
    <property type="entry name" value="IspG"/>
    <property type="match status" value="1"/>
</dbReference>
<dbReference type="SUPFAM" id="SSF56014">
    <property type="entry name" value="Nitrite and sulphite reductase 4Fe-4S domain-like"/>
    <property type="match status" value="1"/>
</dbReference>